<keyword id="KW-0687">Ribonucleoprotein</keyword>
<keyword id="KW-0689">Ribosomal protein</keyword>
<protein>
    <recommendedName>
        <fullName evidence="1">Small ribosomal subunit protein bS16</fullName>
    </recommendedName>
    <alternativeName>
        <fullName evidence="2">30S ribosomal protein S16</fullName>
    </alternativeName>
</protein>
<name>RS16_CLOBL</name>
<feature type="chain" id="PRO_1000049242" description="Small ribosomal subunit protein bS16">
    <location>
        <begin position="1"/>
        <end position="82"/>
    </location>
</feature>
<dbReference type="EMBL" id="CP000728">
    <property type="protein sequence ID" value="ABS42240.1"/>
    <property type="molecule type" value="Genomic_DNA"/>
</dbReference>
<dbReference type="RefSeq" id="WP_004451027.1">
    <property type="nucleotide sequence ID" value="NC_009699.1"/>
</dbReference>
<dbReference type="SMR" id="A7GG36"/>
<dbReference type="GeneID" id="5186703"/>
<dbReference type="KEGG" id="cbf:CLI_2504"/>
<dbReference type="HOGENOM" id="CLU_100590_5_0_9"/>
<dbReference type="Proteomes" id="UP000002410">
    <property type="component" value="Chromosome"/>
</dbReference>
<dbReference type="GO" id="GO:0005737">
    <property type="term" value="C:cytoplasm"/>
    <property type="evidence" value="ECO:0007669"/>
    <property type="project" value="UniProtKB-ARBA"/>
</dbReference>
<dbReference type="GO" id="GO:0015935">
    <property type="term" value="C:small ribosomal subunit"/>
    <property type="evidence" value="ECO:0007669"/>
    <property type="project" value="TreeGrafter"/>
</dbReference>
<dbReference type="GO" id="GO:0003735">
    <property type="term" value="F:structural constituent of ribosome"/>
    <property type="evidence" value="ECO:0007669"/>
    <property type="project" value="InterPro"/>
</dbReference>
<dbReference type="GO" id="GO:0006412">
    <property type="term" value="P:translation"/>
    <property type="evidence" value="ECO:0007669"/>
    <property type="project" value="UniProtKB-UniRule"/>
</dbReference>
<dbReference type="FunFam" id="3.30.1320.10:FF:000002">
    <property type="entry name" value="30S ribosomal protein S16"/>
    <property type="match status" value="1"/>
</dbReference>
<dbReference type="Gene3D" id="3.30.1320.10">
    <property type="match status" value="1"/>
</dbReference>
<dbReference type="HAMAP" id="MF_00385">
    <property type="entry name" value="Ribosomal_bS16"/>
    <property type="match status" value="1"/>
</dbReference>
<dbReference type="InterPro" id="IPR000307">
    <property type="entry name" value="Ribosomal_bS16"/>
</dbReference>
<dbReference type="InterPro" id="IPR020592">
    <property type="entry name" value="Ribosomal_bS16_CS"/>
</dbReference>
<dbReference type="InterPro" id="IPR023803">
    <property type="entry name" value="Ribosomal_bS16_dom_sf"/>
</dbReference>
<dbReference type="NCBIfam" id="TIGR00002">
    <property type="entry name" value="S16"/>
    <property type="match status" value="1"/>
</dbReference>
<dbReference type="PANTHER" id="PTHR12919">
    <property type="entry name" value="30S RIBOSOMAL PROTEIN S16"/>
    <property type="match status" value="1"/>
</dbReference>
<dbReference type="PANTHER" id="PTHR12919:SF20">
    <property type="entry name" value="SMALL RIBOSOMAL SUBUNIT PROTEIN BS16M"/>
    <property type="match status" value="1"/>
</dbReference>
<dbReference type="Pfam" id="PF00886">
    <property type="entry name" value="Ribosomal_S16"/>
    <property type="match status" value="1"/>
</dbReference>
<dbReference type="SUPFAM" id="SSF54565">
    <property type="entry name" value="Ribosomal protein S16"/>
    <property type="match status" value="1"/>
</dbReference>
<dbReference type="PROSITE" id="PS00732">
    <property type="entry name" value="RIBOSOMAL_S16"/>
    <property type="match status" value="1"/>
</dbReference>
<reference key="1">
    <citation type="submission" date="2007-06" db="EMBL/GenBank/DDBJ databases">
        <authorList>
            <person name="Brinkac L.M."/>
            <person name="Daugherty S."/>
            <person name="Dodson R.J."/>
            <person name="Madupu R."/>
            <person name="Brown J.L."/>
            <person name="Bruce D."/>
            <person name="Detter C."/>
            <person name="Munk C."/>
            <person name="Smith L.A."/>
            <person name="Smith T.J."/>
            <person name="White O."/>
            <person name="Brettin T.S."/>
        </authorList>
    </citation>
    <scope>NUCLEOTIDE SEQUENCE [LARGE SCALE GENOMIC DNA]</scope>
    <source>
        <strain>Langeland / NCTC 10281 / Type F</strain>
    </source>
</reference>
<accession>A7GG36</accession>
<sequence>MAVKIRLKRMGAKKAPFYRVVVADSRSPRDGRFVEEIGYYNPITEPSTIKLDEEKVQKWIKNGAQPTDTVKKLIEKAGISVK</sequence>
<comment type="similarity">
    <text evidence="1">Belongs to the bacterial ribosomal protein bS16 family.</text>
</comment>
<organism>
    <name type="scientific">Clostridium botulinum (strain Langeland / NCTC 10281 / Type F)</name>
    <dbReference type="NCBI Taxonomy" id="441772"/>
    <lineage>
        <taxon>Bacteria</taxon>
        <taxon>Bacillati</taxon>
        <taxon>Bacillota</taxon>
        <taxon>Clostridia</taxon>
        <taxon>Eubacteriales</taxon>
        <taxon>Clostridiaceae</taxon>
        <taxon>Clostridium</taxon>
    </lineage>
</organism>
<gene>
    <name evidence="1" type="primary">rpsP</name>
    <name type="ordered locus">CLI_2504</name>
</gene>
<evidence type="ECO:0000255" key="1">
    <source>
        <dbReference type="HAMAP-Rule" id="MF_00385"/>
    </source>
</evidence>
<evidence type="ECO:0000305" key="2"/>
<proteinExistence type="inferred from homology"/>